<evidence type="ECO:0000255" key="1">
    <source>
        <dbReference type="HAMAP-Rule" id="MF_01363"/>
    </source>
</evidence>
<evidence type="ECO:0000305" key="2"/>
<organism>
    <name type="scientific">Acidovorax sp. (strain JS42)</name>
    <dbReference type="NCBI Taxonomy" id="232721"/>
    <lineage>
        <taxon>Bacteria</taxon>
        <taxon>Pseudomonadati</taxon>
        <taxon>Pseudomonadota</taxon>
        <taxon>Betaproteobacteria</taxon>
        <taxon>Burkholderiales</taxon>
        <taxon>Comamonadaceae</taxon>
        <taxon>Acidovorax</taxon>
    </lineage>
</organism>
<feature type="chain" id="PRO_1000067793" description="Large ribosomal subunit protein bL21">
    <location>
        <begin position="1"/>
        <end position="103"/>
    </location>
</feature>
<dbReference type="EMBL" id="CP000539">
    <property type="protein sequence ID" value="ABM41083.1"/>
    <property type="molecule type" value="Genomic_DNA"/>
</dbReference>
<dbReference type="SMR" id="A1W4A8"/>
<dbReference type="STRING" id="232721.Ajs_0841"/>
<dbReference type="KEGG" id="ajs:Ajs_0841"/>
<dbReference type="eggNOG" id="COG0261">
    <property type="taxonomic scope" value="Bacteria"/>
</dbReference>
<dbReference type="HOGENOM" id="CLU_061463_3_2_4"/>
<dbReference type="Proteomes" id="UP000000645">
    <property type="component" value="Chromosome"/>
</dbReference>
<dbReference type="GO" id="GO:0005737">
    <property type="term" value="C:cytoplasm"/>
    <property type="evidence" value="ECO:0007669"/>
    <property type="project" value="UniProtKB-ARBA"/>
</dbReference>
<dbReference type="GO" id="GO:1990904">
    <property type="term" value="C:ribonucleoprotein complex"/>
    <property type="evidence" value="ECO:0007669"/>
    <property type="project" value="UniProtKB-KW"/>
</dbReference>
<dbReference type="GO" id="GO:0005840">
    <property type="term" value="C:ribosome"/>
    <property type="evidence" value="ECO:0007669"/>
    <property type="project" value="UniProtKB-KW"/>
</dbReference>
<dbReference type="GO" id="GO:0019843">
    <property type="term" value="F:rRNA binding"/>
    <property type="evidence" value="ECO:0007669"/>
    <property type="project" value="UniProtKB-UniRule"/>
</dbReference>
<dbReference type="GO" id="GO:0003735">
    <property type="term" value="F:structural constituent of ribosome"/>
    <property type="evidence" value="ECO:0007669"/>
    <property type="project" value="InterPro"/>
</dbReference>
<dbReference type="GO" id="GO:0006412">
    <property type="term" value="P:translation"/>
    <property type="evidence" value="ECO:0007669"/>
    <property type="project" value="UniProtKB-UniRule"/>
</dbReference>
<dbReference type="HAMAP" id="MF_01363">
    <property type="entry name" value="Ribosomal_bL21"/>
    <property type="match status" value="1"/>
</dbReference>
<dbReference type="InterPro" id="IPR028909">
    <property type="entry name" value="bL21-like"/>
</dbReference>
<dbReference type="InterPro" id="IPR036164">
    <property type="entry name" value="bL21-like_sf"/>
</dbReference>
<dbReference type="InterPro" id="IPR001787">
    <property type="entry name" value="Ribosomal_bL21"/>
</dbReference>
<dbReference type="InterPro" id="IPR018258">
    <property type="entry name" value="Ribosomal_bL21_CS"/>
</dbReference>
<dbReference type="NCBIfam" id="TIGR00061">
    <property type="entry name" value="L21"/>
    <property type="match status" value="1"/>
</dbReference>
<dbReference type="PANTHER" id="PTHR21349">
    <property type="entry name" value="50S RIBOSOMAL PROTEIN L21"/>
    <property type="match status" value="1"/>
</dbReference>
<dbReference type="PANTHER" id="PTHR21349:SF0">
    <property type="entry name" value="LARGE RIBOSOMAL SUBUNIT PROTEIN BL21M"/>
    <property type="match status" value="1"/>
</dbReference>
<dbReference type="Pfam" id="PF00829">
    <property type="entry name" value="Ribosomal_L21p"/>
    <property type="match status" value="1"/>
</dbReference>
<dbReference type="SUPFAM" id="SSF141091">
    <property type="entry name" value="L21p-like"/>
    <property type="match status" value="1"/>
</dbReference>
<dbReference type="PROSITE" id="PS01169">
    <property type="entry name" value="RIBOSOMAL_L21"/>
    <property type="match status" value="1"/>
</dbReference>
<reference key="1">
    <citation type="submission" date="2006-12" db="EMBL/GenBank/DDBJ databases">
        <title>Complete sequence of chromosome 1 of Acidovorax sp. JS42.</title>
        <authorList>
            <person name="Copeland A."/>
            <person name="Lucas S."/>
            <person name="Lapidus A."/>
            <person name="Barry K."/>
            <person name="Detter J.C."/>
            <person name="Glavina del Rio T."/>
            <person name="Dalin E."/>
            <person name="Tice H."/>
            <person name="Pitluck S."/>
            <person name="Chertkov O."/>
            <person name="Brettin T."/>
            <person name="Bruce D."/>
            <person name="Han C."/>
            <person name="Tapia R."/>
            <person name="Gilna P."/>
            <person name="Schmutz J."/>
            <person name="Larimer F."/>
            <person name="Land M."/>
            <person name="Hauser L."/>
            <person name="Kyrpides N."/>
            <person name="Kim E."/>
            <person name="Stahl D."/>
            <person name="Richardson P."/>
        </authorList>
    </citation>
    <scope>NUCLEOTIDE SEQUENCE [LARGE SCALE GENOMIC DNA]</scope>
    <source>
        <strain>JS42</strain>
    </source>
</reference>
<name>RL21_ACISJ</name>
<accession>A1W4A8</accession>
<sequence>MYAVIKTGGKQYRVAAGEKIKVEQIAAEVGQEIVIDQVLAVGNGAELKVGTPLVSGATVKATVVAHGKHDKVRIFKLRRRKHYQKRQGHRQQFTELQIQAIAA</sequence>
<gene>
    <name evidence="1" type="primary">rplU</name>
    <name type="ordered locus">Ajs_0841</name>
</gene>
<protein>
    <recommendedName>
        <fullName evidence="1">Large ribosomal subunit protein bL21</fullName>
    </recommendedName>
    <alternativeName>
        <fullName evidence="2">50S ribosomal protein L21</fullName>
    </alternativeName>
</protein>
<proteinExistence type="inferred from homology"/>
<comment type="function">
    <text evidence="1">This protein binds to 23S rRNA in the presence of protein L20.</text>
</comment>
<comment type="subunit">
    <text evidence="1">Part of the 50S ribosomal subunit. Contacts protein L20.</text>
</comment>
<comment type="similarity">
    <text evidence="1">Belongs to the bacterial ribosomal protein bL21 family.</text>
</comment>
<keyword id="KW-0687">Ribonucleoprotein</keyword>
<keyword id="KW-0689">Ribosomal protein</keyword>
<keyword id="KW-0694">RNA-binding</keyword>
<keyword id="KW-0699">rRNA-binding</keyword>